<protein>
    <recommendedName>
        <fullName evidence="1">tRNA pseudouridine synthase B</fullName>
        <ecNumber evidence="1">5.4.99.25</ecNumber>
    </recommendedName>
    <alternativeName>
        <fullName evidence="1">tRNA pseudouridine(55) synthase</fullName>
        <shortName evidence="1">Psi55 synthase</shortName>
    </alternativeName>
    <alternativeName>
        <fullName evidence="1">tRNA pseudouridylate synthase</fullName>
    </alternativeName>
    <alternativeName>
        <fullName evidence="1">tRNA-uridine isomerase</fullName>
    </alternativeName>
</protein>
<evidence type="ECO:0000255" key="1">
    <source>
        <dbReference type="HAMAP-Rule" id="MF_01080"/>
    </source>
</evidence>
<sequence>MQKSGIFILNKPKNISTYQLINQVKKKLNIKKVGHCGTLDLLATGVVICLVNNATKISDYLLNANKAYQVKIKLFTLTDSYDGEGNIIQTQIPFDISLDQINKVISKYNNYSYEQYPPIYSSIKVNGKKLYQYALANQDVEIKSRKVTIFKTKLLNYDQKNYEIFLDVKCSKGTYIRSLAIDICKDLNTIGYVVELNRTLSGNFDINSAIDIKDLSWKHLTSIYDAVKINDFKVVKYHNILDVKQGKKIVLNNIKDQLVFISDEQNNILAVYQKYENNIFKVKRGGLNNDIY</sequence>
<reference key="1">
    <citation type="submission" date="2005-09" db="EMBL/GenBank/DDBJ databases">
        <authorList>
            <person name="Glass J.I."/>
            <person name="Lartigue C."/>
            <person name="Pfannkoch C."/>
            <person name="Baden-Tillson H."/>
            <person name="Smith H.O."/>
            <person name="Venter J.C."/>
            <person name="Roske K."/>
            <person name="Wise K.S."/>
            <person name="Calcutt M.J."/>
            <person name="Nelson W.C."/>
            <person name="Nierman W.C."/>
        </authorList>
    </citation>
    <scope>NUCLEOTIDE SEQUENCE [LARGE SCALE GENOMIC DNA]</scope>
    <source>
        <strain>California kid / ATCC 27343 / NCTC 10154</strain>
    </source>
</reference>
<organism>
    <name type="scientific">Mycoplasma capricolum subsp. capricolum (strain California kid / ATCC 27343 / NCTC 10154)</name>
    <dbReference type="NCBI Taxonomy" id="340047"/>
    <lineage>
        <taxon>Bacteria</taxon>
        <taxon>Bacillati</taxon>
        <taxon>Mycoplasmatota</taxon>
        <taxon>Mollicutes</taxon>
        <taxon>Mycoplasmataceae</taxon>
        <taxon>Mycoplasma</taxon>
    </lineage>
</organism>
<accession>Q2SSF2</accession>
<feature type="chain" id="PRO_0000229362" description="tRNA pseudouridine synthase B">
    <location>
        <begin position="1"/>
        <end position="292"/>
    </location>
</feature>
<feature type="active site" description="Nucleophile" evidence="1">
    <location>
        <position position="40"/>
    </location>
</feature>
<gene>
    <name evidence="1" type="primary">truB</name>
    <name type="ordered locus">MCAP_0326</name>
</gene>
<name>TRUB_MYCCT</name>
<dbReference type="EC" id="5.4.99.25" evidence="1"/>
<dbReference type="EMBL" id="CP000123">
    <property type="protein sequence ID" value="ABC01192.1"/>
    <property type="molecule type" value="Genomic_DNA"/>
</dbReference>
<dbReference type="RefSeq" id="WP_011387212.1">
    <property type="nucleotide sequence ID" value="NC_007633.1"/>
</dbReference>
<dbReference type="SMR" id="Q2SSF2"/>
<dbReference type="GeneID" id="23778718"/>
<dbReference type="KEGG" id="mcp:MCAP_0326"/>
<dbReference type="HOGENOM" id="CLU_032087_0_2_14"/>
<dbReference type="PhylomeDB" id="Q2SSF2"/>
<dbReference type="Proteomes" id="UP000001928">
    <property type="component" value="Chromosome"/>
</dbReference>
<dbReference type="GO" id="GO:0003723">
    <property type="term" value="F:RNA binding"/>
    <property type="evidence" value="ECO:0007669"/>
    <property type="project" value="InterPro"/>
</dbReference>
<dbReference type="GO" id="GO:0160148">
    <property type="term" value="F:tRNA pseudouridine(55) synthase activity"/>
    <property type="evidence" value="ECO:0007669"/>
    <property type="project" value="UniProtKB-EC"/>
</dbReference>
<dbReference type="GO" id="GO:1990481">
    <property type="term" value="P:mRNA pseudouridine synthesis"/>
    <property type="evidence" value="ECO:0007669"/>
    <property type="project" value="TreeGrafter"/>
</dbReference>
<dbReference type="GO" id="GO:0031119">
    <property type="term" value="P:tRNA pseudouridine synthesis"/>
    <property type="evidence" value="ECO:0007669"/>
    <property type="project" value="UniProtKB-UniRule"/>
</dbReference>
<dbReference type="CDD" id="cd02573">
    <property type="entry name" value="PseudoU_synth_EcTruB"/>
    <property type="match status" value="1"/>
</dbReference>
<dbReference type="Gene3D" id="3.30.2350.10">
    <property type="entry name" value="Pseudouridine synthase"/>
    <property type="match status" value="1"/>
</dbReference>
<dbReference type="HAMAP" id="MF_01080">
    <property type="entry name" value="TruB_bact"/>
    <property type="match status" value="1"/>
</dbReference>
<dbReference type="InterPro" id="IPR020103">
    <property type="entry name" value="PsdUridine_synth_cat_dom_sf"/>
</dbReference>
<dbReference type="InterPro" id="IPR002501">
    <property type="entry name" value="PsdUridine_synth_N"/>
</dbReference>
<dbReference type="InterPro" id="IPR014780">
    <property type="entry name" value="tRNA_psdUridine_synth_TruB"/>
</dbReference>
<dbReference type="NCBIfam" id="TIGR00431">
    <property type="entry name" value="TruB"/>
    <property type="match status" value="1"/>
</dbReference>
<dbReference type="PANTHER" id="PTHR13767:SF2">
    <property type="entry name" value="PSEUDOURIDYLATE SYNTHASE TRUB1"/>
    <property type="match status" value="1"/>
</dbReference>
<dbReference type="PANTHER" id="PTHR13767">
    <property type="entry name" value="TRNA-PSEUDOURIDINE SYNTHASE"/>
    <property type="match status" value="1"/>
</dbReference>
<dbReference type="Pfam" id="PF01509">
    <property type="entry name" value="TruB_N"/>
    <property type="match status" value="1"/>
</dbReference>
<dbReference type="SUPFAM" id="SSF55120">
    <property type="entry name" value="Pseudouridine synthase"/>
    <property type="match status" value="1"/>
</dbReference>
<keyword id="KW-0413">Isomerase</keyword>
<keyword id="KW-0819">tRNA processing</keyword>
<comment type="function">
    <text evidence="1">Responsible for synthesis of pseudouridine from uracil-55 in the psi GC loop of transfer RNAs.</text>
</comment>
<comment type="catalytic activity">
    <reaction evidence="1">
        <text>uridine(55) in tRNA = pseudouridine(55) in tRNA</text>
        <dbReference type="Rhea" id="RHEA:42532"/>
        <dbReference type="Rhea" id="RHEA-COMP:10101"/>
        <dbReference type="Rhea" id="RHEA-COMP:10102"/>
        <dbReference type="ChEBI" id="CHEBI:65314"/>
        <dbReference type="ChEBI" id="CHEBI:65315"/>
        <dbReference type="EC" id="5.4.99.25"/>
    </reaction>
</comment>
<comment type="similarity">
    <text evidence="1">Belongs to the pseudouridine synthase TruB family. Type 1 subfamily.</text>
</comment>
<proteinExistence type="inferred from homology"/>